<accession>Q8DYT4</accession>
<comment type="function">
    <text evidence="1">Cleaves the N-terminal amino acid of tripeptides.</text>
</comment>
<comment type="catalytic activity">
    <reaction evidence="1">
        <text>Release of the N-terminal residue from a tripeptide.</text>
        <dbReference type="EC" id="3.4.11.4"/>
    </reaction>
</comment>
<comment type="cofactor">
    <cofactor evidence="1">
        <name>Zn(2+)</name>
        <dbReference type="ChEBI" id="CHEBI:29105"/>
    </cofactor>
    <text evidence="1">Binds 2 Zn(2+) ions per subunit.</text>
</comment>
<comment type="subcellular location">
    <subcellularLocation>
        <location evidence="1">Cytoplasm</location>
    </subcellularLocation>
</comment>
<comment type="similarity">
    <text evidence="1">Belongs to the peptidase M20B family.</text>
</comment>
<dbReference type="EC" id="3.4.11.4" evidence="1"/>
<dbReference type="EMBL" id="AE009948">
    <property type="protein sequence ID" value="AAN00260.1"/>
    <property type="molecule type" value="Genomic_DNA"/>
</dbReference>
<dbReference type="RefSeq" id="NP_688387.1">
    <property type="nucleotide sequence ID" value="NC_004116.1"/>
</dbReference>
<dbReference type="RefSeq" id="WP_000119586.1">
    <property type="nucleotide sequence ID" value="NC_004116.1"/>
</dbReference>
<dbReference type="SMR" id="Q8DYT4"/>
<dbReference type="STRING" id="208435.SAG1389"/>
<dbReference type="MEROPS" id="M20.003"/>
<dbReference type="KEGG" id="sag:SAG1389"/>
<dbReference type="PATRIC" id="fig|208435.3.peg.1397"/>
<dbReference type="HOGENOM" id="CLU_053676_0_0_9"/>
<dbReference type="OrthoDB" id="9804934at2"/>
<dbReference type="Proteomes" id="UP000000821">
    <property type="component" value="Chromosome"/>
</dbReference>
<dbReference type="GO" id="GO:0005829">
    <property type="term" value="C:cytosol"/>
    <property type="evidence" value="ECO:0007669"/>
    <property type="project" value="TreeGrafter"/>
</dbReference>
<dbReference type="GO" id="GO:0008237">
    <property type="term" value="F:metallopeptidase activity"/>
    <property type="evidence" value="ECO:0007669"/>
    <property type="project" value="UniProtKB-KW"/>
</dbReference>
<dbReference type="GO" id="GO:0045148">
    <property type="term" value="F:tripeptide aminopeptidase activity"/>
    <property type="evidence" value="ECO:0007669"/>
    <property type="project" value="UniProtKB-UniRule"/>
</dbReference>
<dbReference type="GO" id="GO:0008270">
    <property type="term" value="F:zinc ion binding"/>
    <property type="evidence" value="ECO:0007669"/>
    <property type="project" value="UniProtKB-UniRule"/>
</dbReference>
<dbReference type="GO" id="GO:0043171">
    <property type="term" value="P:peptide catabolic process"/>
    <property type="evidence" value="ECO:0007669"/>
    <property type="project" value="UniProtKB-UniRule"/>
</dbReference>
<dbReference type="GO" id="GO:0006508">
    <property type="term" value="P:proteolysis"/>
    <property type="evidence" value="ECO:0007669"/>
    <property type="project" value="UniProtKB-UniRule"/>
</dbReference>
<dbReference type="CDD" id="cd03892">
    <property type="entry name" value="M20_peptT"/>
    <property type="match status" value="1"/>
</dbReference>
<dbReference type="FunFam" id="3.30.70.360:FF:000002">
    <property type="entry name" value="Peptidase T"/>
    <property type="match status" value="1"/>
</dbReference>
<dbReference type="Gene3D" id="3.30.70.360">
    <property type="match status" value="1"/>
</dbReference>
<dbReference type="Gene3D" id="3.40.630.10">
    <property type="entry name" value="Zn peptidases"/>
    <property type="match status" value="1"/>
</dbReference>
<dbReference type="HAMAP" id="MF_00550">
    <property type="entry name" value="Aminopeptidase_M20"/>
    <property type="match status" value="1"/>
</dbReference>
<dbReference type="InterPro" id="IPR001261">
    <property type="entry name" value="ArgE/DapE_CS"/>
</dbReference>
<dbReference type="InterPro" id="IPR036264">
    <property type="entry name" value="Bact_exopeptidase_dim_dom"/>
</dbReference>
<dbReference type="InterPro" id="IPR002933">
    <property type="entry name" value="Peptidase_M20"/>
</dbReference>
<dbReference type="InterPro" id="IPR011650">
    <property type="entry name" value="Peptidase_M20_dimer"/>
</dbReference>
<dbReference type="InterPro" id="IPR010161">
    <property type="entry name" value="Peptidase_M20B"/>
</dbReference>
<dbReference type="NCBIfam" id="TIGR01882">
    <property type="entry name" value="peptidase-T"/>
    <property type="match status" value="1"/>
</dbReference>
<dbReference type="NCBIfam" id="NF003976">
    <property type="entry name" value="PRK05469.1"/>
    <property type="match status" value="1"/>
</dbReference>
<dbReference type="NCBIfam" id="NF009920">
    <property type="entry name" value="PRK13381.1"/>
    <property type="match status" value="1"/>
</dbReference>
<dbReference type="PANTHER" id="PTHR42994">
    <property type="entry name" value="PEPTIDASE T"/>
    <property type="match status" value="1"/>
</dbReference>
<dbReference type="PANTHER" id="PTHR42994:SF1">
    <property type="entry name" value="PEPTIDASE T"/>
    <property type="match status" value="1"/>
</dbReference>
<dbReference type="Pfam" id="PF07687">
    <property type="entry name" value="M20_dimer"/>
    <property type="match status" value="1"/>
</dbReference>
<dbReference type="Pfam" id="PF01546">
    <property type="entry name" value="Peptidase_M20"/>
    <property type="match status" value="1"/>
</dbReference>
<dbReference type="PIRSF" id="PIRSF037215">
    <property type="entry name" value="Peptidase_M20B"/>
    <property type="match status" value="1"/>
</dbReference>
<dbReference type="SUPFAM" id="SSF55031">
    <property type="entry name" value="Bacterial exopeptidase dimerisation domain"/>
    <property type="match status" value="1"/>
</dbReference>
<dbReference type="SUPFAM" id="SSF53187">
    <property type="entry name" value="Zn-dependent exopeptidases"/>
    <property type="match status" value="1"/>
</dbReference>
<dbReference type="PROSITE" id="PS00758">
    <property type="entry name" value="ARGE_DAPE_CPG2_1"/>
    <property type="match status" value="1"/>
</dbReference>
<dbReference type="PROSITE" id="PS00759">
    <property type="entry name" value="ARGE_DAPE_CPG2_2"/>
    <property type="match status" value="1"/>
</dbReference>
<gene>
    <name evidence="1" type="primary">pepT</name>
    <name type="ordered locus">SAG1389</name>
</gene>
<evidence type="ECO:0000255" key="1">
    <source>
        <dbReference type="HAMAP-Rule" id="MF_00550"/>
    </source>
</evidence>
<sequence>MSYEKLLERFLTYVKINTRSNPNSTQTPTTQSQVDFALTVLKPEMEAIGLKDVHYLPSNGYLVGTLPATSDRLRHKIGFISHMDTADFNAENITPQIVDYKGGDIELGDSGYILSPKDFPNLNNYHGQTLITTDGKTLLGADDKSGIAEIMTAMEYLASHPEIEHCEIRVGFGPDEEIGIGADKFDVKDFDVDFAYTVDGGPLGELQYETFSAAGLELTFEGRNVHPGTAKNQMINALQLAMDFHSQLPENERPEQTDGYQGFYHLYDLSGTVDQAKSSYIIRDFEEVDFLKRKHLAQDIADNMNEALQSERVKVKLYDQYYNMKKVIEKDMTPINIAKEVMEELDIKPIIEPIRGGTDGSKISFMGIPTPNLFAGGENMHGRFEFVSLQTMEKAVDVILGIVAKD</sequence>
<proteinExistence type="inferred from homology"/>
<organism>
    <name type="scientific">Streptococcus agalactiae serotype V (strain ATCC BAA-611 / 2603 V/R)</name>
    <dbReference type="NCBI Taxonomy" id="208435"/>
    <lineage>
        <taxon>Bacteria</taxon>
        <taxon>Bacillati</taxon>
        <taxon>Bacillota</taxon>
        <taxon>Bacilli</taxon>
        <taxon>Lactobacillales</taxon>
        <taxon>Streptococcaceae</taxon>
        <taxon>Streptococcus</taxon>
    </lineage>
</organism>
<feature type="chain" id="PRO_1000129053" description="Peptidase T">
    <location>
        <begin position="1"/>
        <end position="406"/>
    </location>
</feature>
<feature type="active site" evidence="1">
    <location>
        <position position="84"/>
    </location>
</feature>
<feature type="active site" description="Proton acceptor" evidence="1">
    <location>
        <position position="176"/>
    </location>
</feature>
<feature type="binding site" evidence="1">
    <location>
        <position position="82"/>
    </location>
    <ligand>
        <name>Zn(2+)</name>
        <dbReference type="ChEBI" id="CHEBI:29105"/>
        <label>1</label>
    </ligand>
</feature>
<feature type="binding site" evidence="1">
    <location>
        <position position="142"/>
    </location>
    <ligand>
        <name>Zn(2+)</name>
        <dbReference type="ChEBI" id="CHEBI:29105"/>
        <label>1</label>
    </ligand>
</feature>
<feature type="binding site" evidence="1">
    <location>
        <position position="142"/>
    </location>
    <ligand>
        <name>Zn(2+)</name>
        <dbReference type="ChEBI" id="CHEBI:29105"/>
        <label>2</label>
    </ligand>
</feature>
<feature type="binding site" evidence="1">
    <location>
        <position position="177"/>
    </location>
    <ligand>
        <name>Zn(2+)</name>
        <dbReference type="ChEBI" id="CHEBI:29105"/>
        <label>2</label>
    </ligand>
</feature>
<feature type="binding site" evidence="1">
    <location>
        <position position="199"/>
    </location>
    <ligand>
        <name>Zn(2+)</name>
        <dbReference type="ChEBI" id="CHEBI:29105"/>
        <label>1</label>
    </ligand>
</feature>
<feature type="binding site" evidence="1">
    <location>
        <position position="381"/>
    </location>
    <ligand>
        <name>Zn(2+)</name>
        <dbReference type="ChEBI" id="CHEBI:29105"/>
        <label>2</label>
    </ligand>
</feature>
<keyword id="KW-0031">Aminopeptidase</keyword>
<keyword id="KW-0963">Cytoplasm</keyword>
<keyword id="KW-0378">Hydrolase</keyword>
<keyword id="KW-0479">Metal-binding</keyword>
<keyword id="KW-0482">Metalloprotease</keyword>
<keyword id="KW-0645">Protease</keyword>
<keyword id="KW-1185">Reference proteome</keyword>
<keyword id="KW-0862">Zinc</keyword>
<protein>
    <recommendedName>
        <fullName evidence="1">Peptidase T</fullName>
        <ecNumber evidence="1">3.4.11.4</ecNumber>
    </recommendedName>
    <alternativeName>
        <fullName evidence="1">Aminotripeptidase</fullName>
        <shortName evidence="1">Tripeptidase</shortName>
    </alternativeName>
    <alternativeName>
        <fullName evidence="1">Tripeptide aminopeptidase</fullName>
    </alternativeName>
</protein>
<reference key="1">
    <citation type="journal article" date="2002" name="Proc. Natl. Acad. Sci. U.S.A.">
        <title>Complete genome sequence and comparative genomic analysis of an emerging human pathogen, serotype V Streptococcus agalactiae.</title>
        <authorList>
            <person name="Tettelin H."/>
            <person name="Masignani V."/>
            <person name="Cieslewicz M.J."/>
            <person name="Eisen J.A."/>
            <person name="Peterson S.N."/>
            <person name="Wessels M.R."/>
            <person name="Paulsen I.T."/>
            <person name="Nelson K.E."/>
            <person name="Margarit I."/>
            <person name="Read T.D."/>
            <person name="Madoff L.C."/>
            <person name="Wolf A.M."/>
            <person name="Beanan M.J."/>
            <person name="Brinkac L.M."/>
            <person name="Daugherty S.C."/>
            <person name="DeBoy R.T."/>
            <person name="Durkin A.S."/>
            <person name="Kolonay J.F."/>
            <person name="Madupu R."/>
            <person name="Lewis M.R."/>
            <person name="Radune D."/>
            <person name="Fedorova N.B."/>
            <person name="Scanlan D."/>
            <person name="Khouri H.M."/>
            <person name="Mulligan S."/>
            <person name="Carty H.A."/>
            <person name="Cline R.T."/>
            <person name="Van Aken S.E."/>
            <person name="Gill J."/>
            <person name="Scarselli M."/>
            <person name="Mora M."/>
            <person name="Iacobini E.T."/>
            <person name="Brettoni C."/>
            <person name="Galli G."/>
            <person name="Mariani M."/>
            <person name="Vegni F."/>
            <person name="Maione D."/>
            <person name="Rinaudo D."/>
            <person name="Rappuoli R."/>
            <person name="Telford J.L."/>
            <person name="Kasper D.L."/>
            <person name="Grandi G."/>
            <person name="Fraser C.M."/>
        </authorList>
    </citation>
    <scope>NUCLEOTIDE SEQUENCE [LARGE SCALE GENOMIC DNA]</scope>
    <source>
        <strain>ATCC BAA-611 / 2603 V/R</strain>
    </source>
</reference>
<name>PEPT_STRA5</name>